<evidence type="ECO:0000255" key="1">
    <source>
        <dbReference type="HAMAP-Rule" id="MF_00145"/>
    </source>
</evidence>
<evidence type="ECO:0000256" key="2">
    <source>
        <dbReference type="SAM" id="MobiDB-lite"/>
    </source>
</evidence>
<protein>
    <recommendedName>
        <fullName evidence="1">Phosphoglycerate kinase</fullName>
        <ecNumber evidence="1">2.7.2.3</ecNumber>
    </recommendedName>
</protein>
<proteinExistence type="inferred from homology"/>
<dbReference type="EC" id="2.7.2.3" evidence="1"/>
<dbReference type="EMBL" id="BA000026">
    <property type="protein sequence ID" value="BAC44609.1"/>
    <property type="molecule type" value="Genomic_DNA"/>
</dbReference>
<dbReference type="RefSeq" id="WP_011077638.1">
    <property type="nucleotide sequence ID" value="NC_004432.1"/>
</dbReference>
<dbReference type="SMR" id="Q8EUV2"/>
<dbReference type="FunCoup" id="Q8EUV2">
    <property type="interactions" value="214"/>
</dbReference>
<dbReference type="STRING" id="272633.gene:10731938"/>
<dbReference type="KEGG" id="mpe:MYPE8160"/>
<dbReference type="eggNOG" id="COG0126">
    <property type="taxonomic scope" value="Bacteria"/>
</dbReference>
<dbReference type="HOGENOM" id="CLU_025427_0_2_14"/>
<dbReference type="InParanoid" id="Q8EUV2"/>
<dbReference type="UniPathway" id="UPA00109">
    <property type="reaction ID" value="UER00185"/>
</dbReference>
<dbReference type="Proteomes" id="UP000002522">
    <property type="component" value="Chromosome"/>
</dbReference>
<dbReference type="GO" id="GO:0005829">
    <property type="term" value="C:cytosol"/>
    <property type="evidence" value="ECO:0007669"/>
    <property type="project" value="TreeGrafter"/>
</dbReference>
<dbReference type="GO" id="GO:0043531">
    <property type="term" value="F:ADP binding"/>
    <property type="evidence" value="ECO:0007669"/>
    <property type="project" value="TreeGrafter"/>
</dbReference>
<dbReference type="GO" id="GO:0005524">
    <property type="term" value="F:ATP binding"/>
    <property type="evidence" value="ECO:0007669"/>
    <property type="project" value="UniProtKB-KW"/>
</dbReference>
<dbReference type="GO" id="GO:0004618">
    <property type="term" value="F:phosphoglycerate kinase activity"/>
    <property type="evidence" value="ECO:0007669"/>
    <property type="project" value="UniProtKB-UniRule"/>
</dbReference>
<dbReference type="GO" id="GO:0006094">
    <property type="term" value="P:gluconeogenesis"/>
    <property type="evidence" value="ECO:0007669"/>
    <property type="project" value="TreeGrafter"/>
</dbReference>
<dbReference type="GO" id="GO:0006096">
    <property type="term" value="P:glycolytic process"/>
    <property type="evidence" value="ECO:0007669"/>
    <property type="project" value="UniProtKB-UniRule"/>
</dbReference>
<dbReference type="FunFam" id="3.40.50.1260:FF:000001">
    <property type="entry name" value="Phosphoglycerate kinase"/>
    <property type="match status" value="1"/>
</dbReference>
<dbReference type="Gene3D" id="3.40.50.1260">
    <property type="entry name" value="Phosphoglycerate kinase, N-terminal domain"/>
    <property type="match status" value="2"/>
</dbReference>
<dbReference type="HAMAP" id="MF_00145">
    <property type="entry name" value="Phosphoglyc_kinase"/>
    <property type="match status" value="1"/>
</dbReference>
<dbReference type="InterPro" id="IPR001576">
    <property type="entry name" value="Phosphoglycerate_kinase"/>
</dbReference>
<dbReference type="InterPro" id="IPR015911">
    <property type="entry name" value="Phosphoglycerate_kinase_CS"/>
</dbReference>
<dbReference type="InterPro" id="IPR015824">
    <property type="entry name" value="Phosphoglycerate_kinase_N"/>
</dbReference>
<dbReference type="InterPro" id="IPR036043">
    <property type="entry name" value="Phosphoglycerate_kinase_sf"/>
</dbReference>
<dbReference type="PANTHER" id="PTHR11406">
    <property type="entry name" value="PHOSPHOGLYCERATE KINASE"/>
    <property type="match status" value="1"/>
</dbReference>
<dbReference type="PANTHER" id="PTHR11406:SF23">
    <property type="entry name" value="PHOSPHOGLYCERATE KINASE 1, CHLOROPLASTIC-RELATED"/>
    <property type="match status" value="1"/>
</dbReference>
<dbReference type="Pfam" id="PF00162">
    <property type="entry name" value="PGK"/>
    <property type="match status" value="1"/>
</dbReference>
<dbReference type="PIRSF" id="PIRSF000724">
    <property type="entry name" value="Pgk"/>
    <property type="match status" value="1"/>
</dbReference>
<dbReference type="PRINTS" id="PR00477">
    <property type="entry name" value="PHGLYCKINASE"/>
</dbReference>
<dbReference type="SUPFAM" id="SSF53748">
    <property type="entry name" value="Phosphoglycerate kinase"/>
    <property type="match status" value="1"/>
</dbReference>
<dbReference type="PROSITE" id="PS00111">
    <property type="entry name" value="PGLYCERATE_KINASE"/>
    <property type="match status" value="1"/>
</dbReference>
<sequence length="471" mass="50727">MEYNKKIVTDLTDLKGKKVILRCDFNVPINKTSGEITDYTRIDAALQTINYLLDKGVKLIVLSHLSRVKTLEDISSGKKSLKVVHKALKNRLLGKTVLFEENNRNKDLPKIIDGMEEGSLLLLENTRYADVNEKGEVVKLESKNDPSLGKFWASLADIFVNDAFGTSHRAHASNVGIAKNIKESAIGFLVNKELAKLSKAVVNPRKPVVAIFGGAKVSDKVPSIKNIGKFADKILIGGGMAFIFLKAKGFEIGKSLYEDDQLELTKELLSEFGNKIVLPVDAVVADSIKAAKGKRYDMEQFPADLAGFDVGKKTIKLFKKELKLAETVIWNGPLGVFENDAFNKGTLKVCKYIAKITAKKGCYSVIGGGDSAAAAAKCGVTHSFSHISTGGGASLEFFSGVELPGVACIKNKGEEGKVEAVKEKTTTTTESASKEKSSTAKTASKPATSKTTAAKKPAEKKPAAKKPAAKK</sequence>
<gene>
    <name evidence="1" type="primary">pgk</name>
    <name type="ordered locus">MYPE8160</name>
</gene>
<comment type="catalytic activity">
    <reaction evidence="1">
        <text>(2R)-3-phosphoglycerate + ATP = (2R)-3-phospho-glyceroyl phosphate + ADP</text>
        <dbReference type="Rhea" id="RHEA:14801"/>
        <dbReference type="ChEBI" id="CHEBI:30616"/>
        <dbReference type="ChEBI" id="CHEBI:57604"/>
        <dbReference type="ChEBI" id="CHEBI:58272"/>
        <dbReference type="ChEBI" id="CHEBI:456216"/>
        <dbReference type="EC" id="2.7.2.3"/>
    </reaction>
</comment>
<comment type="pathway">
    <text evidence="1">Carbohydrate degradation; glycolysis; pyruvate from D-glyceraldehyde 3-phosphate: step 2/5.</text>
</comment>
<comment type="subunit">
    <text evidence="1">Monomer.</text>
</comment>
<comment type="subcellular location">
    <subcellularLocation>
        <location evidence="1">Cytoplasm</location>
    </subcellularLocation>
</comment>
<comment type="similarity">
    <text evidence="1">Belongs to the phosphoglycerate kinase family.</text>
</comment>
<accession>Q8EUV2</accession>
<name>PGK_MALP2</name>
<keyword id="KW-0067">ATP-binding</keyword>
<keyword id="KW-0963">Cytoplasm</keyword>
<keyword id="KW-0324">Glycolysis</keyword>
<keyword id="KW-0418">Kinase</keyword>
<keyword id="KW-0547">Nucleotide-binding</keyword>
<keyword id="KW-1185">Reference proteome</keyword>
<keyword id="KW-0808">Transferase</keyword>
<feature type="chain" id="PRO_0000145970" description="Phosphoglycerate kinase">
    <location>
        <begin position="1"/>
        <end position="471"/>
    </location>
</feature>
<feature type="region of interest" description="Disordered" evidence="2">
    <location>
        <begin position="417"/>
        <end position="471"/>
    </location>
</feature>
<feature type="compositionally biased region" description="Low complexity" evidence="2">
    <location>
        <begin position="439"/>
        <end position="455"/>
    </location>
</feature>
<feature type="binding site" evidence="1">
    <location>
        <begin position="24"/>
        <end position="26"/>
    </location>
    <ligand>
        <name>substrate</name>
    </ligand>
</feature>
<feature type="binding site" evidence="1">
    <location>
        <position position="41"/>
    </location>
    <ligand>
        <name>substrate</name>
    </ligand>
</feature>
<feature type="binding site" evidence="1">
    <location>
        <begin position="64"/>
        <end position="67"/>
    </location>
    <ligand>
        <name>substrate</name>
    </ligand>
</feature>
<feature type="binding site" evidence="1">
    <location>
        <position position="127"/>
    </location>
    <ligand>
        <name>substrate</name>
    </ligand>
</feature>
<feature type="binding site" evidence="1">
    <location>
        <position position="169"/>
    </location>
    <ligand>
        <name>substrate</name>
    </ligand>
</feature>
<feature type="binding site" evidence="1">
    <location>
        <position position="220"/>
    </location>
    <ligand>
        <name>ATP</name>
        <dbReference type="ChEBI" id="CHEBI:30616"/>
    </ligand>
</feature>
<feature type="binding site" evidence="1">
    <location>
        <position position="307"/>
    </location>
    <ligand>
        <name>ATP</name>
        <dbReference type="ChEBI" id="CHEBI:30616"/>
    </ligand>
</feature>
<feature type="binding site" evidence="1">
    <location>
        <position position="338"/>
    </location>
    <ligand>
        <name>ATP</name>
        <dbReference type="ChEBI" id="CHEBI:30616"/>
    </ligand>
</feature>
<feature type="binding site" evidence="1">
    <location>
        <begin position="368"/>
        <end position="371"/>
    </location>
    <ligand>
        <name>ATP</name>
        <dbReference type="ChEBI" id="CHEBI:30616"/>
    </ligand>
</feature>
<reference key="1">
    <citation type="journal article" date="2002" name="Nucleic Acids Res.">
        <title>The complete genomic sequence of Mycoplasma penetrans, an intracellular bacterial pathogen in humans.</title>
        <authorList>
            <person name="Sasaki Y."/>
            <person name="Ishikawa J."/>
            <person name="Yamashita A."/>
            <person name="Oshima K."/>
            <person name="Kenri T."/>
            <person name="Furuya K."/>
            <person name="Yoshino C."/>
            <person name="Horino A."/>
            <person name="Shiba T."/>
            <person name="Sasaki T."/>
            <person name="Hattori M."/>
        </authorList>
    </citation>
    <scope>NUCLEOTIDE SEQUENCE [LARGE SCALE GENOMIC DNA]</scope>
    <source>
        <strain>HF-2</strain>
    </source>
</reference>
<organism>
    <name type="scientific">Malacoplasma penetrans (strain HF-2)</name>
    <name type="common">Mycoplasma penetrans</name>
    <dbReference type="NCBI Taxonomy" id="272633"/>
    <lineage>
        <taxon>Bacteria</taxon>
        <taxon>Bacillati</taxon>
        <taxon>Mycoplasmatota</taxon>
        <taxon>Mycoplasmoidales</taxon>
        <taxon>Mycoplasmoidaceae</taxon>
        <taxon>Malacoplasma</taxon>
    </lineage>
</organism>